<comment type="function">
    <text evidence="5 6 9">Catalyzes the oxidation of succinate semialdehyde to succinate. Can utilize both NAD(+) or NADP(+) as a coenzyme, but has a 2.5-fold lower activity with NADP(+) than with NAD(+) (PubMed:25092794). Functions in a gamma-aminobutyrate (GABA) degradation pathway that allows growth utilizing GABA as a nitrogen source (PubMed:3888627). Functions in the GABA shunt, which allows to bypass 2 reactions in the TCA cycle by removing alpha-ketoglutarate from the cycle and feeding succinate and NADH back into the cycle (Probable).</text>
</comment>
<comment type="catalytic activity">
    <reaction evidence="5">
        <text>succinate semialdehyde + NAD(+) + H2O = succinate + NADH + 2 H(+)</text>
        <dbReference type="Rhea" id="RHEA:13217"/>
        <dbReference type="ChEBI" id="CHEBI:15377"/>
        <dbReference type="ChEBI" id="CHEBI:15378"/>
        <dbReference type="ChEBI" id="CHEBI:30031"/>
        <dbReference type="ChEBI" id="CHEBI:57540"/>
        <dbReference type="ChEBI" id="CHEBI:57706"/>
        <dbReference type="ChEBI" id="CHEBI:57945"/>
        <dbReference type="EC" id="1.2.1.16"/>
    </reaction>
</comment>
<comment type="catalytic activity">
    <reaction evidence="5">
        <text>succinate semialdehyde + NADP(+) + H2O = succinate + NADPH + 2 H(+)</text>
        <dbReference type="Rhea" id="RHEA:13213"/>
        <dbReference type="ChEBI" id="CHEBI:15377"/>
        <dbReference type="ChEBI" id="CHEBI:15378"/>
        <dbReference type="ChEBI" id="CHEBI:30031"/>
        <dbReference type="ChEBI" id="CHEBI:57706"/>
        <dbReference type="ChEBI" id="CHEBI:57783"/>
        <dbReference type="ChEBI" id="CHEBI:58349"/>
        <dbReference type="EC" id="1.2.1.16"/>
    </reaction>
</comment>
<comment type="activity regulation">
    <text evidence="5">Inhibited by AMP, ADP anf ATP.</text>
</comment>
<comment type="biophysicochemical properties">
    <kinetics>
        <KM evidence="5">15.48 uM for succinate semialdehyde</KM>
        <KM evidence="5">579 uM for NAD(+)</KM>
        <KM evidence="5">1017 uM for NADP(+)</KM>
    </kinetics>
    <phDependence>
        <text evidence="5">Optimum pH is 8.4.</text>
    </phDependence>
    <temperatureDependence>
        <text evidence="5">Optimum temperature is 25 degrees Celsius.</text>
    </temperatureDependence>
</comment>
<comment type="pathway">
    <text evidence="9">Amino-acid degradation; 4-aminobutanoate degradation.</text>
</comment>
<comment type="subunit">
    <text evidence="5">Homotetramer.</text>
</comment>
<comment type="subcellular location">
    <subcellularLocation>
        <location evidence="4">Cytoplasm</location>
    </subcellularLocation>
</comment>
<comment type="similarity">
    <text evidence="8">Belongs to the aldehyde dehydrogenase family.</text>
</comment>
<gene>
    <name evidence="7" type="primary">UGA2</name>
    <name type="synonym">UGA5</name>
    <name type="ordered locus">YBR006W</name>
    <name type="ORF">YBR0112</name>
</gene>
<organism>
    <name type="scientific">Saccharomyces cerevisiae (strain ATCC 204508 / S288c)</name>
    <name type="common">Baker's yeast</name>
    <dbReference type="NCBI Taxonomy" id="559292"/>
    <lineage>
        <taxon>Eukaryota</taxon>
        <taxon>Fungi</taxon>
        <taxon>Dikarya</taxon>
        <taxon>Ascomycota</taxon>
        <taxon>Saccharomycotina</taxon>
        <taxon>Saccharomycetes</taxon>
        <taxon>Saccharomycetales</taxon>
        <taxon>Saccharomycetaceae</taxon>
        <taxon>Saccharomyces</taxon>
    </lineage>
</organism>
<protein>
    <recommendedName>
        <fullName evidence="8">Succinate-semialdehyde dehydrogenase [NADP(+)]</fullName>
        <shortName>SSA dehydrogenase</shortName>
        <shortName>SSADH</shortName>
        <shortName>SSDH</shortName>
        <ecNumber evidence="5">1.2.1.16</ecNumber>
    </recommendedName>
</protein>
<dbReference type="EC" id="1.2.1.16" evidence="5"/>
<dbReference type="EMBL" id="Z35875">
    <property type="protein sequence ID" value="CAA84943.1"/>
    <property type="molecule type" value="Genomic_DNA"/>
</dbReference>
<dbReference type="EMBL" id="Z35876">
    <property type="protein sequence ID" value="CAA84945.1"/>
    <property type="molecule type" value="Genomic_DNA"/>
</dbReference>
<dbReference type="EMBL" id="BK006936">
    <property type="protein sequence ID" value="DAA07127.1"/>
    <property type="molecule type" value="Genomic_DNA"/>
</dbReference>
<dbReference type="PIR" id="S45858">
    <property type="entry name" value="S45858"/>
</dbReference>
<dbReference type="RefSeq" id="NP_009560.1">
    <property type="nucleotide sequence ID" value="NM_001178354.1"/>
</dbReference>
<dbReference type="SMR" id="P38067"/>
<dbReference type="BioGRID" id="32707">
    <property type="interactions" value="64"/>
</dbReference>
<dbReference type="DIP" id="DIP-1759N"/>
<dbReference type="FunCoup" id="P38067">
    <property type="interactions" value="592"/>
</dbReference>
<dbReference type="IntAct" id="P38067">
    <property type="interactions" value="4"/>
</dbReference>
<dbReference type="MINT" id="P38067"/>
<dbReference type="STRING" id="4932.YBR006W"/>
<dbReference type="iPTMnet" id="P38067"/>
<dbReference type="PaxDb" id="4932-YBR006W"/>
<dbReference type="PeptideAtlas" id="P38067"/>
<dbReference type="EnsemblFungi" id="YBR006W_mRNA">
    <property type="protein sequence ID" value="YBR006W"/>
    <property type="gene ID" value="YBR006W"/>
</dbReference>
<dbReference type="GeneID" id="852291"/>
<dbReference type="KEGG" id="sce:YBR006W"/>
<dbReference type="AGR" id="SGD:S000000210"/>
<dbReference type="SGD" id="S000000210">
    <property type="gene designation" value="UGA2"/>
</dbReference>
<dbReference type="VEuPathDB" id="FungiDB:YBR006W"/>
<dbReference type="eggNOG" id="KOG2451">
    <property type="taxonomic scope" value="Eukaryota"/>
</dbReference>
<dbReference type="GeneTree" id="ENSGT00930000151038"/>
<dbReference type="HOGENOM" id="CLU_005391_5_1_1"/>
<dbReference type="InParanoid" id="P38067"/>
<dbReference type="OMA" id="IVTGMPT"/>
<dbReference type="OrthoDB" id="310895at2759"/>
<dbReference type="BioCyc" id="MetaCyc:YBR006W-MONOMER"/>
<dbReference type="BioCyc" id="YEAST:YBR006W-MONOMER"/>
<dbReference type="Reactome" id="R-SCE-916853">
    <property type="pathway name" value="Degradation of GABA"/>
</dbReference>
<dbReference type="UniPathway" id="UPA00733"/>
<dbReference type="BioGRID-ORCS" id="852291">
    <property type="hits" value="0 hits in 10 CRISPR screens"/>
</dbReference>
<dbReference type="PRO" id="PR:P38067"/>
<dbReference type="Proteomes" id="UP000002311">
    <property type="component" value="Chromosome II"/>
</dbReference>
<dbReference type="RNAct" id="P38067">
    <property type="molecule type" value="protein"/>
</dbReference>
<dbReference type="GO" id="GO:0005737">
    <property type="term" value="C:cytoplasm"/>
    <property type="evidence" value="ECO:0007005"/>
    <property type="project" value="SGD"/>
</dbReference>
<dbReference type="GO" id="GO:0004777">
    <property type="term" value="F:succinate-semialdehyde dehydrogenase (NAD+) activity"/>
    <property type="evidence" value="ECO:0000318"/>
    <property type="project" value="GO_Central"/>
</dbReference>
<dbReference type="GO" id="GO:0036243">
    <property type="term" value="F:succinate-semialdehyde dehydrogenase (NADP+) activity"/>
    <property type="evidence" value="ECO:0007669"/>
    <property type="project" value="RHEA"/>
</dbReference>
<dbReference type="GO" id="GO:0009013">
    <property type="term" value="F:succinate-semialdehyde dehydrogenase [NAD(P)+] activity"/>
    <property type="evidence" value="ECO:0000315"/>
    <property type="project" value="SGD"/>
</dbReference>
<dbReference type="GO" id="GO:0034599">
    <property type="term" value="P:cellular response to oxidative stress"/>
    <property type="evidence" value="ECO:0000315"/>
    <property type="project" value="SGD"/>
</dbReference>
<dbReference type="GO" id="GO:0006540">
    <property type="term" value="P:gamma-aminobutyrate shunt"/>
    <property type="evidence" value="ECO:0000315"/>
    <property type="project" value="SGD"/>
</dbReference>
<dbReference type="GO" id="GO:0009450">
    <property type="term" value="P:gamma-aminobutyric acid catabolic process"/>
    <property type="evidence" value="ECO:0000315"/>
    <property type="project" value="SGD"/>
</dbReference>
<dbReference type="CDD" id="cd07103">
    <property type="entry name" value="ALDH_F5_SSADH_GabD"/>
    <property type="match status" value="1"/>
</dbReference>
<dbReference type="FunFam" id="3.40.309.10:FF:000004">
    <property type="entry name" value="Succinate-semialdehyde dehydrogenase I"/>
    <property type="match status" value="1"/>
</dbReference>
<dbReference type="FunFam" id="3.40.605.10:FF:000005">
    <property type="entry name" value="Succinate-semialdehyde dehydrogenase I"/>
    <property type="match status" value="1"/>
</dbReference>
<dbReference type="Gene3D" id="3.40.605.10">
    <property type="entry name" value="Aldehyde Dehydrogenase, Chain A, domain 1"/>
    <property type="match status" value="1"/>
</dbReference>
<dbReference type="Gene3D" id="3.40.309.10">
    <property type="entry name" value="Aldehyde Dehydrogenase, Chain A, domain 2"/>
    <property type="match status" value="1"/>
</dbReference>
<dbReference type="InterPro" id="IPR016161">
    <property type="entry name" value="Ald_DH/histidinol_DH"/>
</dbReference>
<dbReference type="InterPro" id="IPR016163">
    <property type="entry name" value="Ald_DH_C"/>
</dbReference>
<dbReference type="InterPro" id="IPR029510">
    <property type="entry name" value="Ald_DH_CS_GLU"/>
</dbReference>
<dbReference type="InterPro" id="IPR016162">
    <property type="entry name" value="Ald_DH_N"/>
</dbReference>
<dbReference type="InterPro" id="IPR015590">
    <property type="entry name" value="Aldehyde_DH_dom"/>
</dbReference>
<dbReference type="InterPro" id="IPR050740">
    <property type="entry name" value="Aldehyde_DH_Superfamily"/>
</dbReference>
<dbReference type="InterPro" id="IPR010102">
    <property type="entry name" value="Succ_semiAld_DH"/>
</dbReference>
<dbReference type="NCBIfam" id="TIGR01780">
    <property type="entry name" value="SSADH"/>
    <property type="match status" value="1"/>
</dbReference>
<dbReference type="PANTHER" id="PTHR43353">
    <property type="entry name" value="SUCCINATE-SEMIALDEHYDE DEHYDROGENASE, MITOCHONDRIAL"/>
    <property type="match status" value="1"/>
</dbReference>
<dbReference type="PANTHER" id="PTHR43353:SF5">
    <property type="entry name" value="SUCCINATE-SEMIALDEHYDE DEHYDROGENASE, MITOCHONDRIAL"/>
    <property type="match status" value="1"/>
</dbReference>
<dbReference type="Pfam" id="PF00171">
    <property type="entry name" value="Aldedh"/>
    <property type="match status" value="1"/>
</dbReference>
<dbReference type="SUPFAM" id="SSF53720">
    <property type="entry name" value="ALDH-like"/>
    <property type="match status" value="1"/>
</dbReference>
<dbReference type="PROSITE" id="PS00687">
    <property type="entry name" value="ALDEHYDE_DEHYDR_GLU"/>
    <property type="match status" value="1"/>
</dbReference>
<keyword id="KW-0963">Cytoplasm</keyword>
<keyword id="KW-0521">NADP</keyword>
<keyword id="KW-0560">Oxidoreductase</keyword>
<keyword id="KW-1185">Reference proteome</keyword>
<evidence type="ECO:0000250" key="1"/>
<evidence type="ECO:0000255" key="2">
    <source>
        <dbReference type="PROSITE-ProRule" id="PRU10007"/>
    </source>
</evidence>
<evidence type="ECO:0000255" key="3">
    <source>
        <dbReference type="PROSITE-ProRule" id="PRU10008"/>
    </source>
</evidence>
<evidence type="ECO:0000269" key="4">
    <source>
    </source>
</evidence>
<evidence type="ECO:0000269" key="5">
    <source>
    </source>
</evidence>
<evidence type="ECO:0000269" key="6">
    <source>
    </source>
</evidence>
<evidence type="ECO:0000303" key="7">
    <source>
    </source>
</evidence>
<evidence type="ECO:0000305" key="8"/>
<evidence type="ECO:0000305" key="9">
    <source>
    </source>
</evidence>
<accession>P38067</accession>
<accession>D6VQ07</accession>
<accession>E9PAD1</accession>
<proteinExistence type="evidence at protein level"/>
<sequence>MTLSKYSKPTLNDPNLFRESGYIDGKWVKGTDEVFEVVDPASGEIIARVPEQPVSVVEEAIDVAYETFKTYKNTTPRERAKWLRNMYNLMLENLDDLATIITLENGKALGEAKGEIKYAASYFEWYAEEAPRLYGATIQPLNPHNRVFTIRQPVGVCGIICPWNFPSAMITRKAAAALAVGCTVVIKPDSQTPLSALAMAYLAEKAGFPKGSFNVILSHANTPKLGKTLCESPKVKKVTFTGSTNVGKILMKQSSSTLKKLSFELGGNAPFIVFEDADLDQALEQAMACKFRGLGQTCVCANRLYVHSSIIDKFAKLLAERVKKFVIGHGLDPKTTHGCVINSSAIEKVERHKQDAIDKGAKVVLEGGRLTELGPNFYAPVILSHVPSTAIVSKEETFGPLCPIFSFDTMEEVVGYANDTEFGLAAYVFSKNVNTLYTVSEALETGMVSCNTGVFSDCSIPFGGVKESGFGREGSLYGIEDYTVLKTITIGNLPNSI</sequence>
<reference key="1">
    <citation type="journal article" date="1994" name="EMBO J.">
        <title>Complete DNA sequence of yeast chromosome II.</title>
        <authorList>
            <person name="Feldmann H."/>
            <person name="Aigle M."/>
            <person name="Aljinovic G."/>
            <person name="Andre B."/>
            <person name="Baclet M.C."/>
            <person name="Barthe C."/>
            <person name="Baur A."/>
            <person name="Becam A.-M."/>
            <person name="Biteau N."/>
            <person name="Boles E."/>
            <person name="Brandt T."/>
            <person name="Brendel M."/>
            <person name="Brueckner M."/>
            <person name="Bussereau F."/>
            <person name="Christiansen C."/>
            <person name="Contreras R."/>
            <person name="Crouzet M."/>
            <person name="Cziepluch C."/>
            <person name="Demolis N."/>
            <person name="Delaveau T."/>
            <person name="Doignon F."/>
            <person name="Domdey H."/>
            <person name="Duesterhus S."/>
            <person name="Dubois E."/>
            <person name="Dujon B."/>
            <person name="El Bakkoury M."/>
            <person name="Entian K.-D."/>
            <person name="Feuermann M."/>
            <person name="Fiers W."/>
            <person name="Fobo G.M."/>
            <person name="Fritz C."/>
            <person name="Gassenhuber J."/>
            <person name="Glansdorff N."/>
            <person name="Goffeau A."/>
            <person name="Grivell L.A."/>
            <person name="de Haan M."/>
            <person name="Hein C."/>
            <person name="Herbert C.J."/>
            <person name="Hollenberg C.P."/>
            <person name="Holmstroem K."/>
            <person name="Jacq C."/>
            <person name="Jacquet M."/>
            <person name="Jauniaux J.-C."/>
            <person name="Jonniaux J.-L."/>
            <person name="Kallesoee T."/>
            <person name="Kiesau P."/>
            <person name="Kirchrath L."/>
            <person name="Koetter P."/>
            <person name="Korol S."/>
            <person name="Liebl S."/>
            <person name="Logghe M."/>
            <person name="Lohan A.J.E."/>
            <person name="Louis E.J."/>
            <person name="Li Z.Y."/>
            <person name="Maat M.J."/>
            <person name="Mallet L."/>
            <person name="Mannhaupt G."/>
            <person name="Messenguy F."/>
            <person name="Miosga T."/>
            <person name="Molemans F."/>
            <person name="Mueller S."/>
            <person name="Nasr F."/>
            <person name="Obermaier B."/>
            <person name="Perea J."/>
            <person name="Pierard A."/>
            <person name="Piravandi E."/>
            <person name="Pohl F.M."/>
            <person name="Pohl T.M."/>
            <person name="Potier S."/>
            <person name="Proft M."/>
            <person name="Purnelle B."/>
            <person name="Ramezani Rad M."/>
            <person name="Rieger M."/>
            <person name="Rose M."/>
            <person name="Schaaff-Gerstenschlaeger I."/>
            <person name="Scherens B."/>
            <person name="Schwarzlose C."/>
            <person name="Skala J."/>
            <person name="Slonimski P.P."/>
            <person name="Smits P.H.M."/>
            <person name="Souciet J.-L."/>
            <person name="Steensma H.Y."/>
            <person name="Stucka R."/>
            <person name="Urrestarazu L.A."/>
            <person name="van der Aart Q.J.M."/>
            <person name="Van Dyck L."/>
            <person name="Vassarotti A."/>
            <person name="Vetter I."/>
            <person name="Vierendeels F."/>
            <person name="Vissers S."/>
            <person name="Wagner G."/>
            <person name="de Wergifosse P."/>
            <person name="Wolfe K.H."/>
            <person name="Zagulski M."/>
            <person name="Zimmermann F.K."/>
            <person name="Mewes H.-W."/>
            <person name="Kleine K."/>
        </authorList>
    </citation>
    <scope>NUCLEOTIDE SEQUENCE [LARGE SCALE GENOMIC DNA]</scope>
    <source>
        <strain>ATCC 204508 / S288c</strain>
    </source>
</reference>
<reference key="2">
    <citation type="journal article" date="2014" name="G3 (Bethesda)">
        <title>The reference genome sequence of Saccharomyces cerevisiae: Then and now.</title>
        <authorList>
            <person name="Engel S.R."/>
            <person name="Dietrich F.S."/>
            <person name="Fisk D.G."/>
            <person name="Binkley G."/>
            <person name="Balakrishnan R."/>
            <person name="Costanzo M.C."/>
            <person name="Dwight S.S."/>
            <person name="Hitz B.C."/>
            <person name="Karra K."/>
            <person name="Nash R.S."/>
            <person name="Weng S."/>
            <person name="Wong E.D."/>
            <person name="Lloyd P."/>
            <person name="Skrzypek M.S."/>
            <person name="Miyasato S.R."/>
            <person name="Simison M."/>
            <person name="Cherry J.M."/>
        </authorList>
    </citation>
    <scope>GENOME REANNOTATION</scope>
    <source>
        <strain>ATCC 204508 / S288c</strain>
    </source>
</reference>
<reference key="3">
    <citation type="journal article" date="1985" name="Eur. J. Biochem.">
        <title>Mutations affecting the enzymes involved in the utilization of 4-aminobutyric acid as nitrogen source by the yeast Saccharomyces cerevisiae.</title>
        <authorList>
            <person name="Ramos F."/>
            <person name="El Guezzar M."/>
            <person name="Grenson M."/>
            <person name="Wiame J.-M."/>
        </authorList>
    </citation>
    <scope>FUNCTION</scope>
    <scope>PATHWAY</scope>
</reference>
<reference key="4">
    <citation type="journal article" date="2003" name="Nature">
        <title>Global analysis of protein localization in budding yeast.</title>
        <authorList>
            <person name="Huh W.-K."/>
            <person name="Falvo J.V."/>
            <person name="Gerke L.C."/>
            <person name="Carroll A.S."/>
            <person name="Howson R.W."/>
            <person name="Weissman J.S."/>
            <person name="O'Shea E.K."/>
        </authorList>
    </citation>
    <scope>SUBCELLULAR LOCATION [LARGE SCALE ANALYSIS]</scope>
</reference>
<reference key="5">
    <citation type="journal article" date="2012" name="Proc. Natl. Acad. Sci. U.S.A.">
        <title>N-terminal acetylome analyses and functional insights of the N-terminal acetyltransferase NatB.</title>
        <authorList>
            <person name="Van Damme P."/>
            <person name="Lasa M."/>
            <person name="Polevoda B."/>
            <person name="Gazquez C."/>
            <person name="Elosegui-Artola A."/>
            <person name="Kim D.S."/>
            <person name="De Juan-Pardo E."/>
            <person name="Demeyer K."/>
            <person name="Hole K."/>
            <person name="Larrea E."/>
            <person name="Timmerman E."/>
            <person name="Prieto J."/>
            <person name="Arnesen T."/>
            <person name="Sherman F."/>
            <person name="Gevaert K."/>
            <person name="Aldabe R."/>
        </authorList>
    </citation>
    <scope>IDENTIFICATION BY MASS SPECTROMETRY [LARGE SCALE ANALYSIS]</scope>
</reference>
<reference key="6">
    <citation type="journal article" date="2014" name="Yeast">
        <title>Characterization of the recombinant succinic semi-aldehyde dehydrogenase from Saccharomyces cerevisiae.</title>
        <authorList>
            <person name="Cao J."/>
            <person name="Singh N.K."/>
            <person name="Locy R.D."/>
        </authorList>
    </citation>
    <scope>FUNCTION</scope>
    <scope>CATALYTIC ACTIVITY</scope>
    <scope>BIOPHYSICOCHEMICAL PROPERTIES</scope>
    <scope>ACTIVITY REGULATION</scope>
    <scope>SUBUNIT</scope>
</reference>
<name>SSDH_YEAST</name>
<feature type="chain" id="PRO_0000056568" description="Succinate-semialdehyde dehydrogenase [NADP(+)]">
    <location>
        <begin position="1"/>
        <end position="497"/>
    </location>
</feature>
<feature type="active site" description="Proton acceptor" evidence="2">
    <location>
        <position position="264"/>
    </location>
</feature>
<feature type="active site" description="Nucleophile" evidence="3">
    <location>
        <position position="298"/>
    </location>
</feature>
<feature type="site" description="Transition state stabilizer" evidence="1">
    <location>
        <position position="164"/>
    </location>
</feature>